<organism>
    <name type="scientific">Pachyphasma brandbergense</name>
    <name type="common">Gladiator</name>
    <name type="synonym">Heel-walker</name>
    <dbReference type="NCBI Taxonomy" id="1041430"/>
    <lineage>
        <taxon>Eukaryota</taxon>
        <taxon>Metazoa</taxon>
        <taxon>Ecdysozoa</taxon>
        <taxon>Arthropoda</taxon>
        <taxon>Hexapoda</taxon>
        <taxon>Insecta</taxon>
        <taxon>Pterygota</taxon>
        <taxon>Neoptera</taxon>
        <taxon>Polyneoptera</taxon>
        <taxon>Mantophasmatodea</taxon>
        <taxon>Mantophasmatidae</taxon>
        <taxon>Pachyphasma</taxon>
    </lineage>
</organism>
<name>FAR1_PACBA</name>
<proteinExistence type="evidence at protein level"/>
<accession>B3A0J6</accession>
<dbReference type="GO" id="GO:0005576">
    <property type="term" value="C:extracellular region"/>
    <property type="evidence" value="ECO:0007669"/>
    <property type="project" value="UniProtKB-SubCell"/>
</dbReference>
<dbReference type="GO" id="GO:0007218">
    <property type="term" value="P:neuropeptide signaling pathway"/>
    <property type="evidence" value="ECO:0007669"/>
    <property type="project" value="UniProtKB-KW"/>
</dbReference>
<reference evidence="5" key="1">
    <citation type="journal article" date="2012" name="Syst. Biol.">
        <title>Peptidomics-based phylogeny and biogeography of Mantophasmatodea (Hexapoda).</title>
        <authorList>
            <person name="Predel R."/>
            <person name="Neupert S."/>
            <person name="Huetteroth W."/>
            <person name="Kahnt J."/>
            <person name="Waidelich D."/>
            <person name="Roth S."/>
        </authorList>
    </citation>
    <scope>PROTEIN SEQUENCE</scope>
    <scope>AMIDATION AT LEU-7</scope>
    <source>
        <tissue evidence="3">Thoracic perisympathetic organs</tissue>
    </source>
</reference>
<comment type="function">
    <text evidence="1">FMRFamides and FMRFamide-like peptides are neuropeptides.</text>
</comment>
<comment type="subcellular location">
    <subcellularLocation>
        <location evidence="6">Secreted</location>
    </subcellularLocation>
</comment>
<comment type="similarity">
    <text evidence="2">Belongs to the FARP (FMRF amide related peptide) family.</text>
</comment>
<protein>
    <recommendedName>
        <fullName evidence="4">Extended FMRFamide-1</fullName>
        <shortName evidence="4">FMRFa-1</shortName>
    </recommendedName>
</protein>
<keyword id="KW-0027">Amidation</keyword>
<keyword id="KW-0903">Direct protein sequencing</keyword>
<keyword id="KW-0527">Neuropeptide</keyword>
<keyword id="KW-0964">Secreted</keyword>
<evidence type="ECO:0000250" key="1">
    <source>
        <dbReference type="UniProtKB" id="P34405"/>
    </source>
</evidence>
<evidence type="ECO:0000255" key="2"/>
<evidence type="ECO:0000269" key="3">
    <source>
    </source>
</evidence>
<evidence type="ECO:0000303" key="4">
    <source>
    </source>
</evidence>
<evidence type="ECO:0000305" key="5"/>
<evidence type="ECO:0000305" key="6">
    <source>
    </source>
</evidence>
<sequence length="7" mass="834">AQSFLRL</sequence>
<feature type="peptide" id="PRO_0000421481" description="Extended FMRFamide-1" evidence="3">
    <location>
        <begin position="1"/>
        <end position="7"/>
    </location>
</feature>
<feature type="modified residue" description="Leucine amide" evidence="3">
    <location>
        <position position="7"/>
    </location>
</feature>
<feature type="unsure residue" description="L or I" evidence="3">
    <location>
        <position position="5"/>
    </location>
</feature>
<feature type="unsure residue" description="L or I" evidence="3">
    <location>
        <position position="7"/>
    </location>
</feature>